<accession>B5EAS1</accession>
<sequence>MSYGIVTEQIATFDTELRLESGRILGPIDIAYETYGTLNESRSNAILVTHAWTGSAHLAGRYSEDEKRAGWWDEIVGPGALLDTDRYFVICSNVIGSCFGSTGPTSINPKTGKRYNLAFPVITVRDMVKAQALLMDRLGIGKLFCVLGGSMGGMQALEWATQFPERVGSAVVLATTPRPSAQAISLNAVARWAIFNDPNWKKGEYRKNPKDGLALARGIGHITFLSDESMTAKFDRRFSARDGQFDFFGQFEVERYLTYNGYNFVDRFDANSFLYLAKALDLYDVASGCESLEEAFAPVTAPIQFFAFTSDWLYPPAQTEEMVASLKTLGKQVEYHLITSAYGHDAFLLEHQTFTPLVESFLDRVKV</sequence>
<proteinExistence type="inferred from homology"/>
<feature type="chain" id="PRO_1000115223" description="Homoserine O-acetyltransferase">
    <location>
        <begin position="1"/>
        <end position="367"/>
    </location>
</feature>
<feature type="domain" description="AB hydrolase-1" evidence="1">
    <location>
        <begin position="44"/>
        <end position="350"/>
    </location>
</feature>
<feature type="active site" description="Nucleophile" evidence="1">
    <location>
        <position position="150"/>
    </location>
</feature>
<feature type="active site" evidence="1">
    <location>
        <position position="311"/>
    </location>
</feature>
<feature type="active site" evidence="1">
    <location>
        <position position="344"/>
    </location>
</feature>
<feature type="binding site" evidence="1">
    <location>
        <position position="217"/>
    </location>
    <ligand>
        <name>substrate</name>
    </ligand>
</feature>
<feature type="binding site" evidence="1">
    <location>
        <position position="345"/>
    </location>
    <ligand>
        <name>substrate</name>
    </ligand>
</feature>
<organism>
    <name type="scientific">Citrifermentans bemidjiense (strain ATCC BAA-1014 / DSM 16622 / JCM 12645 / Bem)</name>
    <name type="common">Geobacter bemidjiensis</name>
    <dbReference type="NCBI Taxonomy" id="404380"/>
    <lineage>
        <taxon>Bacteria</taxon>
        <taxon>Pseudomonadati</taxon>
        <taxon>Thermodesulfobacteriota</taxon>
        <taxon>Desulfuromonadia</taxon>
        <taxon>Geobacterales</taxon>
        <taxon>Geobacteraceae</taxon>
        <taxon>Citrifermentans</taxon>
    </lineage>
</organism>
<evidence type="ECO:0000255" key="1">
    <source>
        <dbReference type="HAMAP-Rule" id="MF_00296"/>
    </source>
</evidence>
<dbReference type="EC" id="2.3.1.31" evidence="1"/>
<dbReference type="EMBL" id="CP001124">
    <property type="protein sequence ID" value="ACH37380.1"/>
    <property type="molecule type" value="Genomic_DNA"/>
</dbReference>
<dbReference type="RefSeq" id="WP_012528787.1">
    <property type="nucleotide sequence ID" value="NC_011146.1"/>
</dbReference>
<dbReference type="SMR" id="B5EAS1"/>
<dbReference type="STRING" id="404380.Gbem_0349"/>
<dbReference type="ESTHER" id="geobb-metx">
    <property type="family name" value="Homoserine_transacetylase"/>
</dbReference>
<dbReference type="KEGG" id="gbm:Gbem_0349"/>
<dbReference type="eggNOG" id="COG2021">
    <property type="taxonomic scope" value="Bacteria"/>
</dbReference>
<dbReference type="HOGENOM" id="CLU_028760_1_2_7"/>
<dbReference type="OrthoDB" id="9800754at2"/>
<dbReference type="UniPathway" id="UPA00051">
    <property type="reaction ID" value="UER00074"/>
</dbReference>
<dbReference type="Proteomes" id="UP000008825">
    <property type="component" value="Chromosome"/>
</dbReference>
<dbReference type="GO" id="GO:0005737">
    <property type="term" value="C:cytoplasm"/>
    <property type="evidence" value="ECO:0007669"/>
    <property type="project" value="UniProtKB-SubCell"/>
</dbReference>
<dbReference type="GO" id="GO:0004414">
    <property type="term" value="F:homoserine O-acetyltransferase activity"/>
    <property type="evidence" value="ECO:0007669"/>
    <property type="project" value="UniProtKB-UniRule"/>
</dbReference>
<dbReference type="GO" id="GO:0009092">
    <property type="term" value="P:homoserine metabolic process"/>
    <property type="evidence" value="ECO:0007669"/>
    <property type="project" value="TreeGrafter"/>
</dbReference>
<dbReference type="GO" id="GO:0009086">
    <property type="term" value="P:methionine biosynthetic process"/>
    <property type="evidence" value="ECO:0007669"/>
    <property type="project" value="UniProtKB-UniRule"/>
</dbReference>
<dbReference type="FunFam" id="1.10.1740.110:FF:000001">
    <property type="entry name" value="Homoserine O-acetyltransferase"/>
    <property type="match status" value="1"/>
</dbReference>
<dbReference type="Gene3D" id="1.10.1740.110">
    <property type="match status" value="1"/>
</dbReference>
<dbReference type="Gene3D" id="3.40.50.1820">
    <property type="entry name" value="alpha/beta hydrolase"/>
    <property type="match status" value="1"/>
</dbReference>
<dbReference type="HAMAP" id="MF_00296">
    <property type="entry name" value="MetX_acyltransf"/>
    <property type="match status" value="1"/>
</dbReference>
<dbReference type="InterPro" id="IPR000073">
    <property type="entry name" value="AB_hydrolase_1"/>
</dbReference>
<dbReference type="InterPro" id="IPR029058">
    <property type="entry name" value="AB_hydrolase_fold"/>
</dbReference>
<dbReference type="InterPro" id="IPR008220">
    <property type="entry name" value="HAT_MetX-like"/>
</dbReference>
<dbReference type="NCBIfam" id="TIGR01392">
    <property type="entry name" value="homoserO_Ac_trn"/>
    <property type="match status" value="1"/>
</dbReference>
<dbReference type="NCBIfam" id="NF001209">
    <property type="entry name" value="PRK00175.1"/>
    <property type="match status" value="1"/>
</dbReference>
<dbReference type="PANTHER" id="PTHR32268">
    <property type="entry name" value="HOMOSERINE O-ACETYLTRANSFERASE"/>
    <property type="match status" value="1"/>
</dbReference>
<dbReference type="PANTHER" id="PTHR32268:SF11">
    <property type="entry name" value="HOMOSERINE O-ACETYLTRANSFERASE"/>
    <property type="match status" value="1"/>
</dbReference>
<dbReference type="Pfam" id="PF00561">
    <property type="entry name" value="Abhydrolase_1"/>
    <property type="match status" value="1"/>
</dbReference>
<dbReference type="PIRSF" id="PIRSF000443">
    <property type="entry name" value="Homoser_Ac_trans"/>
    <property type="match status" value="1"/>
</dbReference>
<dbReference type="SUPFAM" id="SSF53474">
    <property type="entry name" value="alpha/beta-Hydrolases"/>
    <property type="match status" value="1"/>
</dbReference>
<gene>
    <name evidence="1" type="primary">metXA</name>
    <name type="ordered locus">Gbem_0349</name>
</gene>
<reference key="1">
    <citation type="submission" date="2008-07" db="EMBL/GenBank/DDBJ databases">
        <title>Complete sequence of Geobacter bemidjiensis BEM.</title>
        <authorList>
            <consortium name="US DOE Joint Genome Institute"/>
            <person name="Lucas S."/>
            <person name="Copeland A."/>
            <person name="Lapidus A."/>
            <person name="Glavina del Rio T."/>
            <person name="Dalin E."/>
            <person name="Tice H."/>
            <person name="Bruce D."/>
            <person name="Goodwin L."/>
            <person name="Pitluck S."/>
            <person name="Kiss H."/>
            <person name="Brettin T."/>
            <person name="Detter J.C."/>
            <person name="Han C."/>
            <person name="Kuske C.R."/>
            <person name="Schmutz J."/>
            <person name="Larimer F."/>
            <person name="Land M."/>
            <person name="Hauser L."/>
            <person name="Kyrpides N."/>
            <person name="Lykidis A."/>
            <person name="Lovley D."/>
            <person name="Richardson P."/>
        </authorList>
    </citation>
    <scope>NUCLEOTIDE SEQUENCE [LARGE SCALE GENOMIC DNA]</scope>
    <source>
        <strain>ATCC BAA-1014 / DSM 16622 / JCM 12645 / Bem</strain>
    </source>
</reference>
<protein>
    <recommendedName>
        <fullName evidence="1">Homoserine O-acetyltransferase</fullName>
        <shortName evidence="1">HAT</shortName>
        <ecNumber evidence="1">2.3.1.31</ecNumber>
    </recommendedName>
    <alternativeName>
        <fullName evidence="1">Homoserine transacetylase</fullName>
        <shortName evidence="1">HTA</shortName>
    </alternativeName>
</protein>
<name>METXA_CITBB</name>
<keyword id="KW-0012">Acyltransferase</keyword>
<keyword id="KW-0028">Amino-acid biosynthesis</keyword>
<keyword id="KW-0963">Cytoplasm</keyword>
<keyword id="KW-0486">Methionine biosynthesis</keyword>
<keyword id="KW-1185">Reference proteome</keyword>
<keyword id="KW-0808">Transferase</keyword>
<comment type="function">
    <text evidence="1">Transfers an acetyl group from acetyl-CoA to L-homoserine, forming acetyl-L-homoserine.</text>
</comment>
<comment type="catalytic activity">
    <reaction evidence="1">
        <text>L-homoserine + acetyl-CoA = O-acetyl-L-homoserine + CoA</text>
        <dbReference type="Rhea" id="RHEA:13701"/>
        <dbReference type="ChEBI" id="CHEBI:57287"/>
        <dbReference type="ChEBI" id="CHEBI:57288"/>
        <dbReference type="ChEBI" id="CHEBI:57476"/>
        <dbReference type="ChEBI" id="CHEBI:57716"/>
        <dbReference type="EC" id="2.3.1.31"/>
    </reaction>
</comment>
<comment type="pathway">
    <text evidence="1">Amino-acid biosynthesis; L-methionine biosynthesis via de novo pathway; O-acetyl-L-homoserine from L-homoserine: step 1/1.</text>
</comment>
<comment type="subunit">
    <text evidence="1">Homodimer.</text>
</comment>
<comment type="subcellular location">
    <subcellularLocation>
        <location evidence="1">Cytoplasm</location>
    </subcellularLocation>
</comment>
<comment type="similarity">
    <text evidence="1">Belongs to the AB hydrolase superfamily. MetX family.</text>
</comment>